<comment type="function">
    <text>SbcCD cleaves DNA hairpin structures. These structures can inhibit DNA replication and are intermediates in certain DNA recombination reactions. The complex acts as a 3'-&gt;5' double strand exonuclease that can open hairpins. It also has a 5' single-strand endonuclease activity.</text>
</comment>
<comment type="subunit">
    <text>Heterodimer of SbcC and SbcD.</text>
</comment>
<comment type="interaction">
    <interactant intactId="EBI-546919">
        <id>P13458</id>
    </interactant>
    <interactant intactId="EBI-544837">
        <id>P76092</id>
        <label>ynbC</label>
    </interactant>
    <organismsDiffer>false</organismsDiffer>
    <experiments>3</experiments>
</comment>
<comment type="similarity">
    <text evidence="2">Belongs to the SMC family. SbcC subfamily.</text>
</comment>
<name>SBCC_ECOLI</name>
<reference key="1">
    <citation type="journal article" date="1989" name="Nucleic Acids Res.">
        <title>Molecular organization of sbcC, a gene that affects genetic recombination and the viability of DNA palindromes in Escherichia coli K-12.</title>
        <authorList>
            <person name="Naom I.S."/>
            <person name="Morton S.J."/>
            <person name="Leach D.R.F."/>
            <person name="Lloyd R.G."/>
        </authorList>
    </citation>
    <scope>NUCLEOTIDE SEQUENCE [GENOMIC DNA]</scope>
    <source>
        <strain>K12</strain>
    </source>
</reference>
<reference key="2">
    <citation type="submission" date="1997-01" db="EMBL/GenBank/DDBJ databases">
        <title>Sequence of minutes 4-25 of Escherichia coli.</title>
        <authorList>
            <person name="Chung E."/>
            <person name="Allen E."/>
            <person name="Araujo R."/>
            <person name="Aparicio A.M."/>
            <person name="Davis K."/>
            <person name="Duncan M."/>
            <person name="Federspiel N."/>
            <person name="Hyman R."/>
            <person name="Kalman S."/>
            <person name="Komp C."/>
            <person name="Kurdi O."/>
            <person name="Lew H."/>
            <person name="Lin D."/>
            <person name="Namath A."/>
            <person name="Oefner P."/>
            <person name="Roberts D."/>
            <person name="Schramm S."/>
            <person name="Davis R.W."/>
        </authorList>
    </citation>
    <scope>NUCLEOTIDE SEQUENCE [LARGE SCALE GENOMIC DNA]</scope>
    <source>
        <strain>K12 / MG1655 / ATCC 47076</strain>
    </source>
</reference>
<reference key="3">
    <citation type="journal article" date="1997" name="Science">
        <title>The complete genome sequence of Escherichia coli K-12.</title>
        <authorList>
            <person name="Blattner F.R."/>
            <person name="Plunkett G. III"/>
            <person name="Bloch C.A."/>
            <person name="Perna N.T."/>
            <person name="Burland V."/>
            <person name="Riley M."/>
            <person name="Collado-Vides J."/>
            <person name="Glasner J.D."/>
            <person name="Rode C.K."/>
            <person name="Mayhew G.F."/>
            <person name="Gregor J."/>
            <person name="Davis N.W."/>
            <person name="Kirkpatrick H.A."/>
            <person name="Goeden M.A."/>
            <person name="Rose D.J."/>
            <person name="Mau B."/>
            <person name="Shao Y."/>
        </authorList>
    </citation>
    <scope>NUCLEOTIDE SEQUENCE [LARGE SCALE GENOMIC DNA]</scope>
    <source>
        <strain>K12 / MG1655 / ATCC 47076</strain>
    </source>
</reference>
<reference key="4">
    <citation type="journal article" date="2006" name="Mol. Syst. Biol.">
        <title>Highly accurate genome sequences of Escherichia coli K-12 strains MG1655 and W3110.</title>
        <authorList>
            <person name="Hayashi K."/>
            <person name="Morooka N."/>
            <person name="Yamamoto Y."/>
            <person name="Fujita K."/>
            <person name="Isono K."/>
            <person name="Choi S."/>
            <person name="Ohtsubo E."/>
            <person name="Baba T."/>
            <person name="Wanner B.L."/>
            <person name="Mori H."/>
            <person name="Horiuchi T."/>
        </authorList>
    </citation>
    <scope>NUCLEOTIDE SEQUENCE [LARGE SCALE GENOMIC DNA]</scope>
    <source>
        <strain>K12 / W3110 / ATCC 27325 / DSM 5911</strain>
    </source>
</reference>
<reference key="5">
    <citation type="journal article" date="1991" name="J. Bacteriol.">
        <title>Mapping, sequence, and apparent lack of function of araJ, a gene of the Escherichia coli arabinose regulon.</title>
        <authorList>
            <person name="Reeder T.C."/>
            <person name="Schleif R.F."/>
        </authorList>
    </citation>
    <scope>NUCLEOTIDE SEQUENCE [GENOMIC DNA] OF 378-1048</scope>
</reference>
<reference key="6">
    <citation type="journal article" date="1992" name="Genetica">
        <title>The SbcCD protein of Escherichia coli is related to two putative nucleases in the UvrA superfamily of nucleotide-binding proteins.</title>
        <authorList>
            <person name="Leach D.R.F."/>
            <person name="Lloyd R.G."/>
            <person name="Coulson A.F."/>
        </authorList>
    </citation>
    <scope>CHARACTERIZATION</scope>
</reference>
<reference key="7">
    <citation type="journal article" date="2000" name="Genes Cells">
        <title>Genes involved in the determination of the rate of inversions at short inverted repeats.</title>
        <authorList>
            <person name="Slupska M.M."/>
            <person name="Chiang J.-H."/>
            <person name="Luther W.M."/>
            <person name="Stewart J.L."/>
            <person name="Amii L."/>
            <person name="Conrad A."/>
            <person name="Miller J.H."/>
        </authorList>
    </citation>
    <scope>CHARACTERIZATION</scope>
</reference>
<reference key="8">
    <citation type="journal article" date="1998" name="Proc. Natl. Acad. Sci. U.S.A.">
        <title>The SbcCD nuclease of Escherichia coli is a structural maintenance of chromosomes (SMC) family protein that cleaves hairpin DNA.</title>
        <authorList>
            <person name="Connelly J.C."/>
            <person name="Kirkham L.A."/>
            <person name="Leach D.R."/>
        </authorList>
    </citation>
    <scope>CHARACTERIZATION</scope>
</reference>
<reference key="9">
    <citation type="journal article" date="1999" name="Nucleic Acids Res.">
        <title>DNA cleavage and degradation by the SbcCD protein complex from Escherichia coli.</title>
        <authorList>
            <person name="Connelly J.C."/>
            <person name="de Leau E.S."/>
            <person name="Leach D.R."/>
        </authorList>
    </citation>
    <scope>CHARACTERIZATION</scope>
</reference>
<sequence>MKILSLRLKNLNSLKGEWKIDFTREPFASNGLFAITGPTGAGKTTLLDAICLALYHETPRLSNVSQSQNDLMTRDTAECLAEVEFEVKGEAYRAFWSQNRARNQPDGNLQVPRVELARCADGKILADKVKDKLELTATLTGLDYGRFTRSMLLSQGQFAAFLNAKPKERAELLEELTGTEIYGQISAMVFEQHKSARTELEKLQAQASGVTLLTPEQVQSLTASLQVLTDEEKQLITAQQQEQQSLNWLTRQDELQQEASRRQQALQQALAEEEKAQPQLAALSLAQPARNLRPHWERIAEHSAALAHIRQQIEEVNTRLQSTMALRASIRHHAAKQSAELQQQQQSLNTWLQEHDRFRQWNNEPAGWRAQFSQQTSDREHLRQWQQQLTHAEQKLNALAAITLTLTADEVATALAQHAEQRPLRQHLVALHGQIVPQQKRLAQLQVAIQNVTQEQTQRNAALNEMRQRYKEKTQQLADVKTICEQEARIKTLEAQRAQLQAGQPCPLCGSTSHPAVEAYQALEPGVNQSRLLALENEVKKLGEEGATLRGQLDAITKQLQRDENEAQSLRQDEQALTQQWQAVTASLNITLQPLDDIQPWLDAQDEHERQLRLLSQRHELQGQIAAHNQQIIQYQQQIEQRQQLLLTTLTGYALTLPQEDEEESWLATRQQEAQSWQQRQNELTALQNRIQQLTPILETLPQSDELPHCEETVVLENWRQVHEQCLALHSQQQTLQQQDVLAAQSLQKAQAQFDTALQASVFDDQQAFLAALMDEQTLTQLEQLKQNLENQRRQAQTLVTQTAETLAQHQQHRPDDGLALTVTVEQIQQELAQTHQKLRENTTSQGEIRQQLKQDADNRQQQQTLMQQIAQMTQQVEDWGYLNSLIGSKEGDKFRKFAQGLTLDNLVHLANQQLTRLHGRYLLQRKASEALEVEVVDTWQADAVRDTRTLSGGESFLVSLALALALSDLVSHKTRIDSLFLDEGFGTLDSETLDTALDALDALNASGKTIGVISHVEAMKERIPVQIKVKKINGLGYSKLESTFAVK</sequence>
<accession>P13458</accession>
<accession>Q2MC29</accession>
<protein>
    <recommendedName>
        <fullName>Nuclease SbcCD subunit C</fullName>
    </recommendedName>
</protein>
<gene>
    <name type="primary">sbcC</name>
    <name type="synonym">rmuA</name>
    <name type="ordered locus">b0397</name>
    <name type="ordered locus">JW0387</name>
</gene>
<feature type="chain" id="PRO_0000105864" description="Nuclease SbcCD subunit C">
    <location>
        <begin position="1"/>
        <end position="1048"/>
    </location>
</feature>
<feature type="coiled-coil region" evidence="1">
    <location>
        <begin position="191"/>
        <end position="402"/>
    </location>
</feature>
<feature type="coiled-coil region" evidence="1">
    <location>
        <begin position="438"/>
        <end position="502"/>
    </location>
</feature>
<feature type="coiled-coil region" evidence="1">
    <location>
        <begin position="528"/>
        <end position="648"/>
    </location>
</feature>
<feature type="coiled-coil region" evidence="1">
    <location>
        <begin position="671"/>
        <end position="695"/>
    </location>
</feature>
<feature type="coiled-coil region" evidence="1">
    <location>
        <begin position="770"/>
        <end position="880"/>
    </location>
</feature>
<feature type="binding site" evidence="1">
    <location>
        <begin position="37"/>
        <end position="44"/>
    </location>
    <ligand>
        <name>ATP</name>
        <dbReference type="ChEBI" id="CHEBI:30616"/>
    </ligand>
</feature>
<feature type="strand" evidence="4">
    <location>
        <begin position="2"/>
        <end position="11"/>
    </location>
</feature>
<feature type="strand" evidence="4">
    <location>
        <begin position="14"/>
        <end position="24"/>
    </location>
</feature>
<feature type="turn" evidence="4">
    <location>
        <begin position="25"/>
        <end position="29"/>
    </location>
</feature>
<feature type="strand" evidence="4">
    <location>
        <begin position="33"/>
        <end position="36"/>
    </location>
</feature>
<feature type="helix" evidence="4">
    <location>
        <begin position="43"/>
        <end position="55"/>
    </location>
</feature>
<feature type="strand" evidence="4">
    <location>
        <begin position="59"/>
        <end position="62"/>
    </location>
</feature>
<feature type="strand" evidence="4">
    <location>
        <begin position="65"/>
        <end position="67"/>
    </location>
</feature>
<feature type="strand" evidence="4">
    <location>
        <begin position="77"/>
        <end position="87"/>
    </location>
</feature>
<feature type="strand" evidence="4">
    <location>
        <begin position="90"/>
        <end position="100"/>
    </location>
</feature>
<feature type="helix" evidence="4">
    <location>
        <begin position="101"/>
        <end position="103"/>
    </location>
</feature>
<feature type="strand" evidence="3">
    <location>
        <begin position="105"/>
        <end position="107"/>
    </location>
</feature>
<feature type="strand" evidence="4">
    <location>
        <begin position="113"/>
        <end position="118"/>
    </location>
</feature>
<feature type="turn" evidence="4">
    <location>
        <begin position="119"/>
        <end position="121"/>
    </location>
</feature>
<feature type="strand" evidence="4">
    <location>
        <begin position="124"/>
        <end position="126"/>
    </location>
</feature>
<feature type="helix" evidence="4">
    <location>
        <begin position="129"/>
        <end position="140"/>
    </location>
</feature>
<feature type="helix" evidence="4">
    <location>
        <begin position="144"/>
        <end position="150"/>
    </location>
</feature>
<feature type="helix" evidence="4">
    <location>
        <begin position="160"/>
        <end position="163"/>
    </location>
</feature>
<feature type="helix" evidence="4">
    <location>
        <begin position="166"/>
        <end position="177"/>
    </location>
</feature>
<feature type="helix" evidence="4">
    <location>
        <begin position="181"/>
        <end position="200"/>
    </location>
</feature>
<feature type="helix" evidence="4">
    <location>
        <begin position="876"/>
        <end position="886"/>
    </location>
</feature>
<feature type="helix" evidence="4">
    <location>
        <begin position="890"/>
        <end position="892"/>
    </location>
</feature>
<feature type="helix" evidence="4">
    <location>
        <begin position="893"/>
        <end position="899"/>
    </location>
</feature>
<feature type="helix" evidence="4">
    <location>
        <begin position="901"/>
        <end position="918"/>
    </location>
</feature>
<feature type="strand" evidence="4">
    <location>
        <begin position="922"/>
        <end position="926"/>
    </location>
</feature>
<feature type="strand" evidence="4">
    <location>
        <begin position="928"/>
        <end position="931"/>
    </location>
</feature>
<feature type="strand" evidence="4">
    <location>
        <begin position="934"/>
        <end position="938"/>
    </location>
</feature>
<feature type="turn" evidence="4">
    <location>
        <begin position="939"/>
        <end position="943"/>
    </location>
</feature>
<feature type="strand" evidence="4">
    <location>
        <begin position="944"/>
        <end position="946"/>
    </location>
</feature>
<feature type="helix" evidence="4">
    <location>
        <begin position="948"/>
        <end position="950"/>
    </location>
</feature>
<feature type="helix" evidence="4">
    <location>
        <begin position="953"/>
        <end position="969"/>
    </location>
</feature>
<feature type="turn" evidence="4">
    <location>
        <begin position="970"/>
        <end position="974"/>
    </location>
</feature>
<feature type="strand" evidence="4">
    <location>
        <begin position="979"/>
        <end position="984"/>
    </location>
</feature>
<feature type="helix" evidence="4">
    <location>
        <begin position="985"/>
        <end position="988"/>
    </location>
</feature>
<feature type="helix" evidence="4">
    <location>
        <begin position="991"/>
        <end position="1005"/>
    </location>
</feature>
<feature type="turn" evidence="4">
    <location>
        <begin position="1006"/>
        <end position="1008"/>
    </location>
</feature>
<feature type="strand" evidence="4">
    <location>
        <begin position="1010"/>
        <end position="1014"/>
    </location>
</feature>
<feature type="helix" evidence="4">
    <location>
        <begin position="1018"/>
        <end position="1023"/>
    </location>
</feature>
<feature type="strand" evidence="4">
    <location>
        <begin position="1026"/>
        <end position="1029"/>
    </location>
</feature>
<feature type="turn" evidence="4">
    <location>
        <begin position="1034"/>
        <end position="1036"/>
    </location>
</feature>
<feature type="helix" evidence="4">
    <location>
        <begin position="1043"/>
        <end position="1045"/>
    </location>
</feature>
<proteinExistence type="evidence at protein level"/>
<dbReference type="EMBL" id="X15981">
    <property type="protein sequence ID" value="CAA34104.1"/>
    <property type="molecule type" value="Genomic_DNA"/>
</dbReference>
<dbReference type="EMBL" id="U73857">
    <property type="protein sequence ID" value="AAB18121.1"/>
    <property type="molecule type" value="Genomic_DNA"/>
</dbReference>
<dbReference type="EMBL" id="U00096">
    <property type="protein sequence ID" value="AAC73500.1"/>
    <property type="molecule type" value="Genomic_DNA"/>
</dbReference>
<dbReference type="EMBL" id="AP009048">
    <property type="protein sequence ID" value="BAE76177.1"/>
    <property type="molecule type" value="Genomic_DNA"/>
</dbReference>
<dbReference type="EMBL" id="M64787">
    <property type="protein sequence ID" value="AAA23473.1"/>
    <property type="molecule type" value="Genomic_DNA"/>
</dbReference>
<dbReference type="PIR" id="JS0350">
    <property type="entry name" value="BVECSC"/>
</dbReference>
<dbReference type="RefSeq" id="NP_414931.1">
    <property type="nucleotide sequence ID" value="NC_000913.3"/>
</dbReference>
<dbReference type="RefSeq" id="WP_000698951.1">
    <property type="nucleotide sequence ID" value="NZ_SSZK01000009.1"/>
</dbReference>
<dbReference type="PDB" id="6S6V">
    <property type="method" value="EM"/>
    <property type="resolution" value="3.50 A"/>
    <property type="chains" value="C/D=1-1048"/>
</dbReference>
<dbReference type="PDB" id="6S85">
    <property type="method" value="EM"/>
    <property type="resolution" value="4.20 A"/>
    <property type="chains" value="C/D=1-1048"/>
</dbReference>
<dbReference type="PDB" id="7YZO">
    <property type="method" value="EM"/>
    <property type="resolution" value="3.40 A"/>
    <property type="chains" value="C/D=1-1048"/>
</dbReference>
<dbReference type="PDB" id="7YZP">
    <property type="method" value="EM"/>
    <property type="resolution" value="4.00 A"/>
    <property type="chains" value="C/D=1-1048"/>
</dbReference>
<dbReference type="PDB" id="7Z03">
    <property type="method" value="EM"/>
    <property type="resolution" value="3.70 A"/>
    <property type="chains" value="C/D=1-1048"/>
</dbReference>
<dbReference type="PDBsum" id="6S6V"/>
<dbReference type="PDBsum" id="6S85"/>
<dbReference type="PDBsum" id="7YZO"/>
<dbReference type="PDBsum" id="7YZP"/>
<dbReference type="PDBsum" id="7Z03"/>
<dbReference type="EMDB" id="EMD-10107"/>
<dbReference type="EMDB" id="EMD-14391"/>
<dbReference type="EMDB" id="EMD-14393"/>
<dbReference type="EMDB" id="EMD-14403"/>
<dbReference type="SMR" id="P13458"/>
<dbReference type="BioGRID" id="4259821">
    <property type="interactions" value="35"/>
</dbReference>
<dbReference type="BioGRID" id="853317">
    <property type="interactions" value="2"/>
</dbReference>
<dbReference type="ComplexPortal" id="CPX-4021">
    <property type="entry name" value="sbcCD DNA exo/endonuclease complex"/>
</dbReference>
<dbReference type="DIP" id="DIP-342N"/>
<dbReference type="FunCoup" id="P13458">
    <property type="interactions" value="130"/>
</dbReference>
<dbReference type="IntAct" id="P13458">
    <property type="interactions" value="6"/>
</dbReference>
<dbReference type="STRING" id="511145.b0397"/>
<dbReference type="jPOST" id="P13458"/>
<dbReference type="PaxDb" id="511145-b0397"/>
<dbReference type="EnsemblBacteria" id="AAC73500">
    <property type="protein sequence ID" value="AAC73500"/>
    <property type="gene ID" value="b0397"/>
</dbReference>
<dbReference type="GeneID" id="949076"/>
<dbReference type="KEGG" id="ecj:JW0387"/>
<dbReference type="KEGG" id="eco:b0397"/>
<dbReference type="KEGG" id="ecoc:C3026_01930"/>
<dbReference type="PATRIC" id="fig|1411691.4.peg.1882"/>
<dbReference type="EchoBASE" id="EB0920"/>
<dbReference type="eggNOG" id="COG0419">
    <property type="taxonomic scope" value="Bacteria"/>
</dbReference>
<dbReference type="HOGENOM" id="CLU_004785_1_0_6"/>
<dbReference type="InParanoid" id="P13458"/>
<dbReference type="OMA" id="RCAIYRL"/>
<dbReference type="OrthoDB" id="9795626at2"/>
<dbReference type="PhylomeDB" id="P13458"/>
<dbReference type="BioCyc" id="EcoCyc:EG10927-MONOMER"/>
<dbReference type="BioCyc" id="MetaCyc:EG10927-MONOMER"/>
<dbReference type="PRO" id="PR:P13458"/>
<dbReference type="Proteomes" id="UP000000625">
    <property type="component" value="Chromosome"/>
</dbReference>
<dbReference type="GO" id="GO:1990391">
    <property type="term" value="C:DNA repair complex"/>
    <property type="evidence" value="ECO:0000353"/>
    <property type="project" value="ComplexPortal"/>
</dbReference>
<dbReference type="GO" id="GO:0008296">
    <property type="term" value="F:3'-5'-DNA exonuclease activity"/>
    <property type="evidence" value="ECO:0000314"/>
    <property type="project" value="EcoCyc"/>
</dbReference>
<dbReference type="GO" id="GO:0005524">
    <property type="term" value="F:ATP binding"/>
    <property type="evidence" value="ECO:0007669"/>
    <property type="project" value="UniProtKB-KW"/>
</dbReference>
<dbReference type="GO" id="GO:0016887">
    <property type="term" value="F:ATP hydrolysis activity"/>
    <property type="evidence" value="ECO:0007669"/>
    <property type="project" value="InterPro"/>
</dbReference>
<dbReference type="GO" id="GO:0004529">
    <property type="term" value="F:DNA exonuclease activity"/>
    <property type="evidence" value="ECO:0000314"/>
    <property type="project" value="EcoCyc"/>
</dbReference>
<dbReference type="GO" id="GO:1990238">
    <property type="term" value="F:double-stranded DNA endonuclease activity"/>
    <property type="evidence" value="ECO:0000314"/>
    <property type="project" value="EcoCyc"/>
</dbReference>
<dbReference type="GO" id="GO:0000014">
    <property type="term" value="F:single-stranded DNA endodeoxyribonuclease activity"/>
    <property type="evidence" value="ECO:0000314"/>
    <property type="project" value="EcoCyc"/>
</dbReference>
<dbReference type="GO" id="GO:0006310">
    <property type="term" value="P:DNA recombination"/>
    <property type="evidence" value="ECO:0000303"/>
    <property type="project" value="ComplexPortal"/>
</dbReference>
<dbReference type="GO" id="GO:0006281">
    <property type="term" value="P:DNA repair"/>
    <property type="evidence" value="ECO:0000314"/>
    <property type="project" value="EcoCyc"/>
</dbReference>
<dbReference type="GO" id="GO:0006260">
    <property type="term" value="P:DNA replication"/>
    <property type="evidence" value="ECO:0000314"/>
    <property type="project" value="EcoCyc"/>
</dbReference>
<dbReference type="GO" id="GO:0006274">
    <property type="term" value="P:DNA replication termination"/>
    <property type="evidence" value="ECO:0000269"/>
    <property type="project" value="EcoCyc"/>
</dbReference>
<dbReference type="GO" id="GO:0006302">
    <property type="term" value="P:double-strand break repair"/>
    <property type="evidence" value="ECO:0007669"/>
    <property type="project" value="InterPro"/>
</dbReference>
<dbReference type="FunFam" id="3.40.50.300:FF:001467">
    <property type="entry name" value="Nuclease SbcCD subunit C"/>
    <property type="match status" value="1"/>
</dbReference>
<dbReference type="FunFam" id="3.40.50.300:FF:001945">
    <property type="entry name" value="Nuclease SbcCD subunit C"/>
    <property type="match status" value="1"/>
</dbReference>
<dbReference type="Gene3D" id="3.40.50.300">
    <property type="entry name" value="P-loop containing nucleotide triphosphate hydrolases"/>
    <property type="match status" value="2"/>
</dbReference>
<dbReference type="InterPro" id="IPR027417">
    <property type="entry name" value="P-loop_NTPase"/>
</dbReference>
<dbReference type="InterPro" id="IPR038729">
    <property type="entry name" value="Rad50/SbcC_AAA"/>
</dbReference>
<dbReference type="InterPro" id="IPR004592">
    <property type="entry name" value="SbcC_gammaproteobac_type"/>
</dbReference>
<dbReference type="NCBIfam" id="NF007600">
    <property type="entry name" value="PRK10246.1"/>
    <property type="match status" value="1"/>
</dbReference>
<dbReference type="NCBIfam" id="TIGR00618">
    <property type="entry name" value="sbcc"/>
    <property type="match status" value="1"/>
</dbReference>
<dbReference type="PANTHER" id="PTHR32114">
    <property type="entry name" value="ABC TRANSPORTER ABCH.3"/>
    <property type="match status" value="1"/>
</dbReference>
<dbReference type="PANTHER" id="PTHR32114:SF2">
    <property type="entry name" value="ABC TRANSPORTER ABCH.3"/>
    <property type="match status" value="1"/>
</dbReference>
<dbReference type="Pfam" id="PF13476">
    <property type="entry name" value="AAA_23"/>
    <property type="match status" value="1"/>
</dbReference>
<dbReference type="Pfam" id="PF13558">
    <property type="entry name" value="SbcC_Walker_B"/>
    <property type="match status" value="1"/>
</dbReference>
<dbReference type="SUPFAM" id="SSF52540">
    <property type="entry name" value="P-loop containing nucleoside triphosphate hydrolases"/>
    <property type="match status" value="2"/>
</dbReference>
<keyword id="KW-0002">3D-structure</keyword>
<keyword id="KW-0067">ATP-binding</keyword>
<keyword id="KW-0175">Coiled coil</keyword>
<keyword id="KW-0233">DNA recombination</keyword>
<keyword id="KW-0235">DNA replication</keyword>
<keyword id="KW-0255">Endonuclease</keyword>
<keyword id="KW-0269">Exonuclease</keyword>
<keyword id="KW-0378">Hydrolase</keyword>
<keyword id="KW-0540">Nuclease</keyword>
<keyword id="KW-0547">Nucleotide-binding</keyword>
<keyword id="KW-1185">Reference proteome</keyword>
<evidence type="ECO:0000255" key="1"/>
<evidence type="ECO:0000305" key="2"/>
<evidence type="ECO:0007829" key="3">
    <source>
        <dbReference type="PDB" id="6S6V"/>
    </source>
</evidence>
<evidence type="ECO:0007829" key="4">
    <source>
        <dbReference type="PDB" id="7YZO"/>
    </source>
</evidence>
<organism>
    <name type="scientific">Escherichia coli (strain K12)</name>
    <dbReference type="NCBI Taxonomy" id="83333"/>
    <lineage>
        <taxon>Bacteria</taxon>
        <taxon>Pseudomonadati</taxon>
        <taxon>Pseudomonadota</taxon>
        <taxon>Gammaproteobacteria</taxon>
        <taxon>Enterobacterales</taxon>
        <taxon>Enterobacteriaceae</taxon>
        <taxon>Escherichia</taxon>
    </lineage>
</organism>